<organism evidence="2">
    <name type="scientific">Anisakis simplex</name>
    <name type="common">Herring worm</name>
    <dbReference type="NCBI Taxonomy" id="6269"/>
    <lineage>
        <taxon>Eukaryota</taxon>
        <taxon>Metazoa</taxon>
        <taxon>Ecdysozoa</taxon>
        <taxon>Nematoda</taxon>
        <taxon>Chromadorea</taxon>
        <taxon>Rhabditida</taxon>
        <taxon>Spirurina</taxon>
        <taxon>Ascaridomorpha</taxon>
        <taxon>Ascaridoidea</taxon>
        <taxon>Anisakidae</taxon>
        <taxon>Anisakis</taxon>
        <taxon>Anisakis simplex complex</taxon>
    </lineage>
</organism>
<protein>
    <recommendedName>
        <fullName>Allergen Ani s 4</fullName>
    </recommendedName>
    <allergenName>Ani s 4</allergenName>
</protein>
<evidence type="ECO:0000269" key="1">
    <source>
    </source>
</evidence>
<evidence type="ECO:0000305" key="2"/>
<reference key="1">
    <citation type="journal article" date="2005" name="Parasitol. Res.">
        <title>Isolation of a heat-resistant allergen from the fish parasite Anisakis simplex.</title>
        <authorList>
            <person name="Moneo I."/>
            <person name="Caballero M.L."/>
            <person name="Gonzalez-Munoz M."/>
            <person name="Rodriguez-Mahillo A.I."/>
            <person name="Rodriguez-Perez R."/>
            <person name="Silva A."/>
        </authorList>
    </citation>
    <scope>PROTEIN SEQUENCE</scope>
    <scope>SUBCELLULAR LOCATION</scope>
    <scope>ALLERGEN</scope>
</reference>
<name>ANIS4_ANISI</name>
<feature type="chain" id="PRO_0000064599" description="Allergen Ani s 4">
    <location>
        <begin position="1"/>
        <end position="14" status="greater than"/>
    </location>
</feature>
<feature type="non-terminal residue" evidence="2">
    <location>
        <position position="14"/>
    </location>
</feature>
<accession>P83885</accession>
<comment type="subcellular location">
    <subcellularLocation>
        <location evidence="1 2">Secreted</location>
    </subcellularLocation>
</comment>
<comment type="allergen">
    <text evidence="1">Causes an allergic reaction in human. Binds to IgE. A.simplex is a fish parasite that, when accidentally ingested by humans, may cause allergic reactions in sensitized individuals. Heat resistant, can cause allergic reactions after heating at 100 degrees Celsius for 30 minutes.</text>
</comment>
<sequence length="14" mass="1371">GMLGGSSDVDXNXP</sequence>
<proteinExistence type="evidence at protein level"/>
<keyword id="KW-0020">Allergen</keyword>
<keyword id="KW-0903">Direct protein sequencing</keyword>
<keyword id="KW-0964">Secreted</keyword>
<dbReference type="Allergome" id="1420">
    <property type="allergen name" value="Ani s 4"/>
</dbReference>
<dbReference type="Allergome" id="3082">
    <property type="allergen name" value="Ani s 4.0101"/>
</dbReference>
<dbReference type="GO" id="GO:0005576">
    <property type="term" value="C:extracellular region"/>
    <property type="evidence" value="ECO:0007669"/>
    <property type="project" value="UniProtKB-SubCell"/>
</dbReference>